<protein>
    <recommendedName>
        <fullName evidence="1">Ribosomal RNA small subunit methyltransferase I</fullName>
        <ecNumber evidence="1">2.1.1.198</ecNumber>
    </recommendedName>
    <alternativeName>
        <fullName evidence="1">16S rRNA 2'-O-ribose C1402 methyltransferase</fullName>
    </alternativeName>
    <alternativeName>
        <fullName evidence="1">rRNA (cytidine-2'-O-)-methyltransferase RsmI</fullName>
    </alternativeName>
</protein>
<accession>P45298</accession>
<proteinExistence type="inferred from homology"/>
<reference key="1">
    <citation type="journal article" date="1995" name="Science">
        <title>Whole-genome random sequencing and assembly of Haemophilus influenzae Rd.</title>
        <authorList>
            <person name="Fleischmann R.D."/>
            <person name="Adams M.D."/>
            <person name="White O."/>
            <person name="Clayton R.A."/>
            <person name="Kirkness E.F."/>
            <person name="Kerlavage A.R."/>
            <person name="Bult C.J."/>
            <person name="Tomb J.-F."/>
            <person name="Dougherty B.A."/>
            <person name="Merrick J.M."/>
            <person name="McKenney K."/>
            <person name="Sutton G.G."/>
            <person name="FitzHugh W."/>
            <person name="Fields C.A."/>
            <person name="Gocayne J.D."/>
            <person name="Scott J.D."/>
            <person name="Shirley R."/>
            <person name="Liu L.-I."/>
            <person name="Glodek A."/>
            <person name="Kelley J.M."/>
            <person name="Weidman J.F."/>
            <person name="Phillips C.A."/>
            <person name="Spriggs T."/>
            <person name="Hedblom E."/>
            <person name="Cotton M.D."/>
            <person name="Utterback T.R."/>
            <person name="Hanna M.C."/>
            <person name="Nguyen D.T."/>
            <person name="Saudek D.M."/>
            <person name="Brandon R.C."/>
            <person name="Fine L.D."/>
            <person name="Fritchman J.L."/>
            <person name="Fuhrmann J.L."/>
            <person name="Geoghagen N.S.M."/>
            <person name="Gnehm C.L."/>
            <person name="McDonald L.A."/>
            <person name="Small K.V."/>
            <person name="Fraser C.M."/>
            <person name="Smith H.O."/>
            <person name="Venter J.C."/>
        </authorList>
    </citation>
    <scope>NUCLEOTIDE SEQUENCE [LARGE SCALE GENOMIC DNA]</scope>
    <source>
        <strain>ATCC 51907 / DSM 11121 / KW20 / Rd</strain>
    </source>
</reference>
<feature type="chain" id="PRO_0000211940" description="Ribosomal RNA small subunit methyltransferase I">
    <location>
        <begin position="1"/>
        <end position="283"/>
    </location>
</feature>
<name>RSMI_HAEIN</name>
<sequence length="283" mass="31463">MTDLTGILYIVATPIGNLQDITQRALETFAQVDLIAAEDTRHSGLLLSHYGIKKPFFALHDHNEQEKAHILVEKLKQGSNIALISDAGTPLISDPGFHLVRQCREAGIRVVPLPGACAAITALCASGIASDRFCFEGFLPAKSKARKDKLENIAEEDRTLIFYESTHRILDTLEDMQAVLGEERYIVLAREMTKTWETITGNTIKNLREWLLEDPNRTKGEMVLIVEGKPKSDNNDEISPQAVKALELIAEELPLKKAAAIVAELYGYKKNALYQFGLAHLEK</sequence>
<organism>
    <name type="scientific">Haemophilus influenzae (strain ATCC 51907 / DSM 11121 / KW20 / Rd)</name>
    <dbReference type="NCBI Taxonomy" id="71421"/>
    <lineage>
        <taxon>Bacteria</taxon>
        <taxon>Pseudomonadati</taxon>
        <taxon>Pseudomonadota</taxon>
        <taxon>Gammaproteobacteria</taxon>
        <taxon>Pasteurellales</taxon>
        <taxon>Pasteurellaceae</taxon>
        <taxon>Haemophilus</taxon>
    </lineage>
</organism>
<comment type="function">
    <text evidence="1">Catalyzes the 2'-O-methylation of the ribose of cytidine 1402 (C1402) in 16S rRNA.</text>
</comment>
<comment type="catalytic activity">
    <reaction evidence="1">
        <text>cytidine(1402) in 16S rRNA + S-adenosyl-L-methionine = 2'-O-methylcytidine(1402) in 16S rRNA + S-adenosyl-L-homocysteine + H(+)</text>
        <dbReference type="Rhea" id="RHEA:42924"/>
        <dbReference type="Rhea" id="RHEA-COMP:10285"/>
        <dbReference type="Rhea" id="RHEA-COMP:10286"/>
        <dbReference type="ChEBI" id="CHEBI:15378"/>
        <dbReference type="ChEBI" id="CHEBI:57856"/>
        <dbReference type="ChEBI" id="CHEBI:59789"/>
        <dbReference type="ChEBI" id="CHEBI:74495"/>
        <dbReference type="ChEBI" id="CHEBI:82748"/>
        <dbReference type="EC" id="2.1.1.198"/>
    </reaction>
</comment>
<comment type="subcellular location">
    <subcellularLocation>
        <location evidence="1">Cytoplasm</location>
    </subcellularLocation>
</comment>
<comment type="similarity">
    <text evidence="1">Belongs to the methyltransferase superfamily. RsmI family.</text>
</comment>
<gene>
    <name evidence="1" type="primary">rsmI</name>
    <name type="ordered locus">HI_1654</name>
</gene>
<evidence type="ECO:0000255" key="1">
    <source>
        <dbReference type="HAMAP-Rule" id="MF_01877"/>
    </source>
</evidence>
<dbReference type="EC" id="2.1.1.198" evidence="1"/>
<dbReference type="EMBL" id="L42023">
    <property type="protein sequence ID" value="AAC23298.1"/>
    <property type="molecule type" value="Genomic_DNA"/>
</dbReference>
<dbReference type="PIR" id="A64174">
    <property type="entry name" value="A64174"/>
</dbReference>
<dbReference type="RefSeq" id="NP_439796.1">
    <property type="nucleotide sequence ID" value="NC_000907.1"/>
</dbReference>
<dbReference type="SMR" id="P45298"/>
<dbReference type="STRING" id="71421.HI_1654"/>
<dbReference type="EnsemblBacteria" id="AAC23298">
    <property type="protein sequence ID" value="AAC23298"/>
    <property type="gene ID" value="HI_1654"/>
</dbReference>
<dbReference type="KEGG" id="hin:HI_1654"/>
<dbReference type="PATRIC" id="fig|71421.8.peg.1732"/>
<dbReference type="eggNOG" id="COG0313">
    <property type="taxonomic scope" value="Bacteria"/>
</dbReference>
<dbReference type="HOGENOM" id="CLU_044779_4_0_6"/>
<dbReference type="OrthoDB" id="9809084at2"/>
<dbReference type="PhylomeDB" id="P45298"/>
<dbReference type="BioCyc" id="HINF71421:G1GJ1-1671-MONOMER"/>
<dbReference type="Proteomes" id="UP000000579">
    <property type="component" value="Chromosome"/>
</dbReference>
<dbReference type="GO" id="GO:0005737">
    <property type="term" value="C:cytoplasm"/>
    <property type="evidence" value="ECO:0007669"/>
    <property type="project" value="UniProtKB-SubCell"/>
</dbReference>
<dbReference type="GO" id="GO:0070677">
    <property type="term" value="F:rRNA (cytosine-2'-O-)-methyltransferase activity"/>
    <property type="evidence" value="ECO:0007669"/>
    <property type="project" value="UniProtKB-UniRule"/>
</dbReference>
<dbReference type="CDD" id="cd11648">
    <property type="entry name" value="RsmI"/>
    <property type="match status" value="1"/>
</dbReference>
<dbReference type="FunFam" id="3.30.950.10:FF:000002">
    <property type="entry name" value="Ribosomal RNA small subunit methyltransferase I"/>
    <property type="match status" value="1"/>
</dbReference>
<dbReference type="FunFam" id="3.40.1010.10:FF:000002">
    <property type="entry name" value="Ribosomal RNA small subunit methyltransferase I"/>
    <property type="match status" value="1"/>
</dbReference>
<dbReference type="Gene3D" id="3.40.1010.10">
    <property type="entry name" value="Cobalt-precorrin-4 Transmethylase, Domain 1"/>
    <property type="match status" value="1"/>
</dbReference>
<dbReference type="Gene3D" id="3.30.950.10">
    <property type="entry name" value="Methyltransferase, Cobalt-precorrin-4 Transmethylase, Domain 2"/>
    <property type="match status" value="1"/>
</dbReference>
<dbReference type="HAMAP" id="MF_01877">
    <property type="entry name" value="16SrRNA_methyltr_I"/>
    <property type="match status" value="1"/>
</dbReference>
<dbReference type="InterPro" id="IPR000878">
    <property type="entry name" value="4pyrrol_Mease"/>
</dbReference>
<dbReference type="InterPro" id="IPR035996">
    <property type="entry name" value="4pyrrol_Methylase_sf"/>
</dbReference>
<dbReference type="InterPro" id="IPR014777">
    <property type="entry name" value="4pyrrole_Mease_sub1"/>
</dbReference>
<dbReference type="InterPro" id="IPR014776">
    <property type="entry name" value="4pyrrole_Mease_sub2"/>
</dbReference>
<dbReference type="InterPro" id="IPR008189">
    <property type="entry name" value="rRNA_ssu_MeTfrase_I"/>
</dbReference>
<dbReference type="InterPro" id="IPR053910">
    <property type="entry name" value="RsmI_HTH"/>
</dbReference>
<dbReference type="InterPro" id="IPR018063">
    <property type="entry name" value="SAM_MeTrfase_RsmI_CS"/>
</dbReference>
<dbReference type="NCBIfam" id="TIGR00096">
    <property type="entry name" value="16S rRNA (cytidine(1402)-2'-O)-methyltransferase"/>
    <property type="match status" value="1"/>
</dbReference>
<dbReference type="PANTHER" id="PTHR46111">
    <property type="entry name" value="RIBOSOMAL RNA SMALL SUBUNIT METHYLTRANSFERASE I"/>
    <property type="match status" value="1"/>
</dbReference>
<dbReference type="PANTHER" id="PTHR46111:SF1">
    <property type="entry name" value="RIBOSOMAL RNA SMALL SUBUNIT METHYLTRANSFERASE I"/>
    <property type="match status" value="1"/>
</dbReference>
<dbReference type="Pfam" id="PF23016">
    <property type="entry name" value="RsmI_C"/>
    <property type="match status" value="1"/>
</dbReference>
<dbReference type="Pfam" id="PF00590">
    <property type="entry name" value="TP_methylase"/>
    <property type="match status" value="1"/>
</dbReference>
<dbReference type="PIRSF" id="PIRSF005917">
    <property type="entry name" value="MTase_YraL"/>
    <property type="match status" value="1"/>
</dbReference>
<dbReference type="SUPFAM" id="SSF53790">
    <property type="entry name" value="Tetrapyrrole methylase"/>
    <property type="match status" value="1"/>
</dbReference>
<dbReference type="PROSITE" id="PS01296">
    <property type="entry name" value="RSMI"/>
    <property type="match status" value="1"/>
</dbReference>
<keyword id="KW-0963">Cytoplasm</keyword>
<keyword id="KW-0489">Methyltransferase</keyword>
<keyword id="KW-1185">Reference proteome</keyword>
<keyword id="KW-0698">rRNA processing</keyword>
<keyword id="KW-0949">S-adenosyl-L-methionine</keyword>
<keyword id="KW-0808">Transferase</keyword>